<proteinExistence type="inferred from homology"/>
<comment type="function">
    <text evidence="1">The glycine cleavage system catalyzes the degradation of glycine. The P protein binds the alpha-amino group of glycine through its pyridoxal phosphate cofactor; CO(2) is released and the remaining methylamine moiety is then transferred to the lipoamide cofactor of the H protein.</text>
</comment>
<comment type="catalytic activity">
    <reaction evidence="1">
        <text>N(6)-[(R)-lipoyl]-L-lysyl-[glycine-cleavage complex H protein] + glycine + H(+) = N(6)-[(R)-S(8)-aminomethyldihydrolipoyl]-L-lysyl-[glycine-cleavage complex H protein] + CO2</text>
        <dbReference type="Rhea" id="RHEA:24304"/>
        <dbReference type="Rhea" id="RHEA-COMP:10494"/>
        <dbReference type="Rhea" id="RHEA-COMP:10495"/>
        <dbReference type="ChEBI" id="CHEBI:15378"/>
        <dbReference type="ChEBI" id="CHEBI:16526"/>
        <dbReference type="ChEBI" id="CHEBI:57305"/>
        <dbReference type="ChEBI" id="CHEBI:83099"/>
        <dbReference type="ChEBI" id="CHEBI:83143"/>
        <dbReference type="EC" id="1.4.4.2"/>
    </reaction>
</comment>
<comment type="subunit">
    <text evidence="1">The glycine cleavage system is composed of four proteins: P, T, L and H. In this organism, the P 'protein' is a heterodimer of two subunits.</text>
</comment>
<comment type="similarity">
    <text evidence="1">Belongs to the GcvP family. N-terminal subunit subfamily.</text>
</comment>
<protein>
    <recommendedName>
        <fullName evidence="1">Probable glycine dehydrogenase (decarboxylating) subunit 1</fullName>
        <ecNumber evidence="1">1.4.4.2</ecNumber>
    </recommendedName>
    <alternativeName>
        <fullName evidence="1">Glycine cleavage system P-protein subunit 1</fullName>
    </alternativeName>
    <alternativeName>
        <fullName evidence="1">Glycine decarboxylase subunit 1</fullName>
    </alternativeName>
    <alternativeName>
        <fullName evidence="1">Glycine dehydrogenase (aminomethyl-transferring) subunit 1</fullName>
    </alternativeName>
</protein>
<gene>
    <name evidence="1" type="primary">gcvPA</name>
    <name type="ordered locus">SAHV_1523</name>
</gene>
<reference key="1">
    <citation type="journal article" date="2008" name="Antimicrob. Agents Chemother.">
        <title>Mutated response regulator graR is responsible for phenotypic conversion of Staphylococcus aureus from heterogeneous vancomycin-intermediate resistance to vancomycin-intermediate resistance.</title>
        <authorList>
            <person name="Neoh H.-M."/>
            <person name="Cui L."/>
            <person name="Yuzawa H."/>
            <person name="Takeuchi F."/>
            <person name="Matsuo M."/>
            <person name="Hiramatsu K."/>
        </authorList>
    </citation>
    <scope>NUCLEOTIDE SEQUENCE [LARGE SCALE GENOMIC DNA]</scope>
    <source>
        <strain>Mu3 / ATCC 700698</strain>
    </source>
</reference>
<evidence type="ECO:0000255" key="1">
    <source>
        <dbReference type="HAMAP-Rule" id="MF_00712"/>
    </source>
</evidence>
<dbReference type="EC" id="1.4.4.2" evidence="1"/>
<dbReference type="EMBL" id="AP009324">
    <property type="protein sequence ID" value="BAF78406.1"/>
    <property type="molecule type" value="Genomic_DNA"/>
</dbReference>
<dbReference type="RefSeq" id="WP_000019691.1">
    <property type="nucleotide sequence ID" value="NC_009782.1"/>
</dbReference>
<dbReference type="SMR" id="A7X2S0"/>
<dbReference type="KEGG" id="saw:SAHV_1523"/>
<dbReference type="HOGENOM" id="CLU_004620_0_2_9"/>
<dbReference type="GO" id="GO:0004375">
    <property type="term" value="F:glycine dehydrogenase (decarboxylating) activity"/>
    <property type="evidence" value="ECO:0007669"/>
    <property type="project" value="UniProtKB-EC"/>
</dbReference>
<dbReference type="GO" id="GO:0019464">
    <property type="term" value="P:glycine decarboxylation via glycine cleavage system"/>
    <property type="evidence" value="ECO:0007669"/>
    <property type="project" value="UniProtKB-UniRule"/>
</dbReference>
<dbReference type="GO" id="GO:0009116">
    <property type="term" value="P:nucleoside metabolic process"/>
    <property type="evidence" value="ECO:0007669"/>
    <property type="project" value="InterPro"/>
</dbReference>
<dbReference type="CDD" id="cd00613">
    <property type="entry name" value="GDC-P"/>
    <property type="match status" value="1"/>
</dbReference>
<dbReference type="Gene3D" id="3.90.1150.10">
    <property type="entry name" value="Aspartate Aminotransferase, domain 1"/>
    <property type="match status" value="1"/>
</dbReference>
<dbReference type="Gene3D" id="3.40.640.10">
    <property type="entry name" value="Type I PLP-dependent aspartate aminotransferase-like (Major domain)"/>
    <property type="match status" value="1"/>
</dbReference>
<dbReference type="HAMAP" id="MF_00712">
    <property type="entry name" value="GcvPA"/>
    <property type="match status" value="1"/>
</dbReference>
<dbReference type="InterPro" id="IPR023010">
    <property type="entry name" value="GcvPA"/>
</dbReference>
<dbReference type="InterPro" id="IPR049315">
    <property type="entry name" value="GDC-P_N"/>
</dbReference>
<dbReference type="InterPro" id="IPR020581">
    <property type="entry name" value="GDC_P"/>
</dbReference>
<dbReference type="InterPro" id="IPR015424">
    <property type="entry name" value="PyrdxlP-dep_Trfase"/>
</dbReference>
<dbReference type="InterPro" id="IPR015421">
    <property type="entry name" value="PyrdxlP-dep_Trfase_major"/>
</dbReference>
<dbReference type="InterPro" id="IPR015422">
    <property type="entry name" value="PyrdxlP-dep_Trfase_small"/>
</dbReference>
<dbReference type="NCBIfam" id="NF001696">
    <property type="entry name" value="PRK00451.1"/>
    <property type="match status" value="1"/>
</dbReference>
<dbReference type="PANTHER" id="PTHR42806">
    <property type="entry name" value="GLYCINE CLEAVAGE SYSTEM P-PROTEIN"/>
    <property type="match status" value="1"/>
</dbReference>
<dbReference type="PANTHER" id="PTHR42806:SF1">
    <property type="entry name" value="GLYCINE DEHYDROGENASE (DECARBOXYLATING)"/>
    <property type="match status" value="1"/>
</dbReference>
<dbReference type="Pfam" id="PF02347">
    <property type="entry name" value="GDC-P"/>
    <property type="match status" value="1"/>
</dbReference>
<dbReference type="PIRSF" id="PIRSF006815">
    <property type="entry name" value="GcvPA"/>
    <property type="match status" value="1"/>
</dbReference>
<dbReference type="SUPFAM" id="SSF53383">
    <property type="entry name" value="PLP-dependent transferases"/>
    <property type="match status" value="1"/>
</dbReference>
<accession>A7X2S0</accession>
<feature type="chain" id="PRO_1000045679" description="Probable glycine dehydrogenase (decarboxylating) subunit 1">
    <location>
        <begin position="1"/>
        <end position="448"/>
    </location>
</feature>
<keyword id="KW-0560">Oxidoreductase</keyword>
<name>GCSPA_STAA1</name>
<organism>
    <name type="scientific">Staphylococcus aureus (strain Mu3 / ATCC 700698)</name>
    <dbReference type="NCBI Taxonomy" id="418127"/>
    <lineage>
        <taxon>Bacteria</taxon>
        <taxon>Bacillati</taxon>
        <taxon>Bacillota</taxon>
        <taxon>Bacilli</taxon>
        <taxon>Bacillales</taxon>
        <taxon>Staphylococcaceae</taxon>
        <taxon>Staphylococcus</taxon>
    </lineage>
</organism>
<sequence>MSHRYIPLTEKDKQEMLQTIGAKSIGELFGDVPSDILLNRDLNIAEGEAETTLLRRLNRIASKNITKETHTSFLGAGVYDHYAPSVVDAMISRSEFYTAYTPYQPEISQGELQAIFEFQTLICELTDMDVANSSMYDGMTSFAEACILAFSQTKKNKIVVSKGLHYQALQVLHTYAKTRKEFEVVEIDLDGTVTDLKKLEAAVDDETAAVAVQYPNFYGSIEDLEKIQSFIEDKKALFIVYANPLALGLLTPPGSFGADIVVGDTQPFGIPAQFGGPHCGYFATTKKLMRKVPGRLVGQTQDDEGNRGFVLTLQAREQHIRRDKATSNICSNQALNALASSIAMSALGKQGIYDIAVQNIEHANYAKQQFIKKGFEVLDGTSFNEFVVKFDKPIQQVNEELVKYNIIGGFDLGVVSDDFKNHMLIAVTELRTKDEIDTFVEKAGELND</sequence>